<keyword id="KW-1185">Reference proteome</keyword>
<keyword id="KW-0732">Signal</keyword>
<feature type="signal peptide" evidence="2">
    <location>
        <begin position="1"/>
        <end position="20"/>
    </location>
</feature>
<feature type="chain" id="PRO_0000408624" description="Long chronological lifespan protein 2">
    <location>
        <begin position="21"/>
        <end position="132"/>
    </location>
</feature>
<feature type="region of interest" description="Disordered" evidence="3">
    <location>
        <begin position="33"/>
        <end position="59"/>
    </location>
</feature>
<dbReference type="EMBL" id="CU633446">
    <property type="protein sequence ID" value="CAP60921.1"/>
    <property type="molecule type" value="Genomic_DNA"/>
</dbReference>
<dbReference type="EMBL" id="FO904937">
    <property type="protein sequence ID" value="CDP24936.1"/>
    <property type="molecule type" value="Genomic_DNA"/>
</dbReference>
<dbReference type="RefSeq" id="XP_001903149.1">
    <property type="nucleotide sequence ID" value="XM_001903114.1"/>
</dbReference>
<dbReference type="STRING" id="515849.B2ABT3"/>
<dbReference type="GeneID" id="6187218"/>
<dbReference type="KEGG" id="pan:PODANSg161"/>
<dbReference type="VEuPathDB" id="FungiDB:PODANS_0_1040"/>
<dbReference type="eggNOG" id="ENOG502S416">
    <property type="taxonomic scope" value="Eukaryota"/>
</dbReference>
<dbReference type="HOGENOM" id="CLU_142363_0_0_1"/>
<dbReference type="InParanoid" id="B2ABT3"/>
<dbReference type="OrthoDB" id="2234316at2759"/>
<dbReference type="Proteomes" id="UP000001197">
    <property type="component" value="Chromosome 2"/>
</dbReference>
<dbReference type="GO" id="GO:0036503">
    <property type="term" value="P:ERAD pathway"/>
    <property type="evidence" value="ECO:0007669"/>
    <property type="project" value="TreeGrafter"/>
</dbReference>
<dbReference type="CDD" id="cd23996">
    <property type="entry name" value="LCL2-like"/>
    <property type="match status" value="1"/>
</dbReference>
<dbReference type="InterPro" id="IPR034543">
    <property type="entry name" value="LCL2"/>
</dbReference>
<dbReference type="PANTHER" id="PTHR38425">
    <property type="entry name" value="LONG CHRONOLOGICAL LIFESPAN PROTEIN 2"/>
    <property type="match status" value="1"/>
</dbReference>
<dbReference type="PANTHER" id="PTHR38425:SF1">
    <property type="entry name" value="LONG CHRONOLOGICAL LIFESPAN PROTEIN 2"/>
    <property type="match status" value="1"/>
</dbReference>
<evidence type="ECO:0000250" key="1"/>
<evidence type="ECO:0000255" key="2"/>
<evidence type="ECO:0000256" key="3">
    <source>
        <dbReference type="SAM" id="MobiDB-lite"/>
    </source>
</evidence>
<evidence type="ECO:0000305" key="4"/>
<name>LCL2_PODAN</name>
<proteinExistence type="inferred from homology"/>
<protein>
    <recommendedName>
        <fullName>Long chronological lifespan protein 2</fullName>
    </recommendedName>
</protein>
<reference key="1">
    <citation type="journal article" date="2008" name="Genome Biol.">
        <title>The genome sequence of the model ascomycete fungus Podospora anserina.</title>
        <authorList>
            <person name="Espagne E."/>
            <person name="Lespinet O."/>
            <person name="Malagnac F."/>
            <person name="Da Silva C."/>
            <person name="Jaillon O."/>
            <person name="Porcel B.M."/>
            <person name="Couloux A."/>
            <person name="Aury J.-M."/>
            <person name="Segurens B."/>
            <person name="Poulain J."/>
            <person name="Anthouard V."/>
            <person name="Grossetete S."/>
            <person name="Khalili H."/>
            <person name="Coppin E."/>
            <person name="Dequard-Chablat M."/>
            <person name="Picard M."/>
            <person name="Contamine V."/>
            <person name="Arnaise S."/>
            <person name="Bourdais A."/>
            <person name="Berteaux-Lecellier V."/>
            <person name="Gautheret D."/>
            <person name="de Vries R.P."/>
            <person name="Battaglia E."/>
            <person name="Coutinho P.M."/>
            <person name="Danchin E.G.J."/>
            <person name="Henrissat B."/>
            <person name="El Khoury R."/>
            <person name="Sainsard-Chanet A."/>
            <person name="Boivin A."/>
            <person name="Pinan-Lucarre B."/>
            <person name="Sellem C.H."/>
            <person name="Debuchy R."/>
            <person name="Wincker P."/>
            <person name="Weissenbach J."/>
            <person name="Silar P."/>
        </authorList>
    </citation>
    <scope>NUCLEOTIDE SEQUENCE [LARGE SCALE GENOMIC DNA]</scope>
    <source>
        <strain>S / ATCC MYA-4624 / DSM 980 / FGSC 10383</strain>
    </source>
</reference>
<reference key="2">
    <citation type="journal article" date="2014" name="Genetics">
        <title>Maintaining two mating types: Structure of the mating type locus and its role in heterokaryosis in Podospora anserina.</title>
        <authorList>
            <person name="Grognet P."/>
            <person name="Bidard F."/>
            <person name="Kuchly C."/>
            <person name="Tong L.C.H."/>
            <person name="Coppin E."/>
            <person name="Benkhali J.A."/>
            <person name="Couloux A."/>
            <person name="Wincker P."/>
            <person name="Debuchy R."/>
            <person name="Silar P."/>
        </authorList>
    </citation>
    <scope>GENOME REANNOTATION</scope>
    <source>
        <strain>S / ATCC MYA-4624 / DSM 980 / FGSC 10383</strain>
    </source>
</reference>
<accession>B2ABT3</accession>
<accession>A0A090CBC0</accession>
<sequence>MRSLSLILLALATMLTPISAQFGFFDQMFGGGGGGEQEQHHGHGHGGHQRQQQNAPSDGAGYRAQYARLHCDNYLCPDTLACVHFPHHCPCPWPAHEEKVELAEGQRICVSHGGFKAGEAARKVELARKGLL</sequence>
<organism>
    <name type="scientific">Podospora anserina (strain S / ATCC MYA-4624 / DSM 980 / FGSC 10383)</name>
    <name type="common">Pleurage anserina</name>
    <dbReference type="NCBI Taxonomy" id="515849"/>
    <lineage>
        <taxon>Eukaryota</taxon>
        <taxon>Fungi</taxon>
        <taxon>Dikarya</taxon>
        <taxon>Ascomycota</taxon>
        <taxon>Pezizomycotina</taxon>
        <taxon>Sordariomycetes</taxon>
        <taxon>Sordariomycetidae</taxon>
        <taxon>Sordariales</taxon>
        <taxon>Podosporaceae</taxon>
        <taxon>Podospora</taxon>
        <taxon>Podospora anserina</taxon>
    </lineage>
</organism>
<gene>
    <name type="primary">LCL2</name>
    <name type="ordered locus">Pa_0_1040</name>
    <name type="ORF">PODANS_0_1040</name>
</gene>
<comment type="function">
    <text evidence="1">Probable component of the endoplasmic reticulum-associated degradation (ERAD) pathway.</text>
</comment>
<comment type="similarity">
    <text evidence="4">Belongs to the LCL2 family.</text>
</comment>